<feature type="transit peptide" description="Mitochondrion" evidence="3">
    <location>
        <begin position="1"/>
        <end position="45"/>
    </location>
</feature>
<feature type="chain" id="PRO_0000262866" description="4-hydroxybenzoate polyprenyltransferase, mitochondrial" evidence="3">
    <location>
        <begin position="46"/>
        <end position="371"/>
    </location>
</feature>
<feature type="topological domain" description="Mitochondrial matrix" evidence="2">
    <location>
        <begin position="46"/>
        <end position="83"/>
    </location>
</feature>
<feature type="transmembrane region" description="Helical" evidence="3">
    <location>
        <begin position="84"/>
        <end position="104"/>
    </location>
</feature>
<feature type="topological domain" description="Mitochondrial intermembrane" evidence="2">
    <location>
        <begin position="105"/>
        <end position="108"/>
    </location>
</feature>
<feature type="transmembrane region" description="Helical" evidence="3">
    <location>
        <begin position="109"/>
        <end position="129"/>
    </location>
</feature>
<feature type="topological domain" description="Mitochondrial matrix" evidence="2">
    <location>
        <begin position="130"/>
        <end position="171"/>
    </location>
</feature>
<feature type="transmembrane region" description="Helical" evidence="3">
    <location>
        <begin position="172"/>
        <end position="192"/>
    </location>
</feature>
<feature type="topological domain" description="Mitochondrial intermembrane" evidence="2">
    <location>
        <begin position="193"/>
        <end position="200"/>
    </location>
</feature>
<feature type="transmembrane region" description="Helical" evidence="3">
    <location>
        <begin position="201"/>
        <end position="221"/>
    </location>
</feature>
<feature type="topological domain" description="Mitochondrial matrix" evidence="2">
    <location>
        <begin position="222"/>
        <end position="231"/>
    </location>
</feature>
<feature type="transmembrane region" description="Helical" evidence="3">
    <location>
        <begin position="232"/>
        <end position="252"/>
    </location>
</feature>
<feature type="topological domain" description="Mitochondrial intermembrane" evidence="2">
    <location>
        <begin position="253"/>
        <end position="277"/>
    </location>
</feature>
<feature type="transmembrane region" description="Helical" evidence="3">
    <location>
        <begin position="278"/>
        <end position="298"/>
    </location>
</feature>
<feature type="topological domain" description="Mitochondrial matrix" evidence="2">
    <location>
        <begin position="299"/>
        <end position="300"/>
    </location>
</feature>
<feature type="transmembrane region" description="Helical" evidence="3">
    <location>
        <begin position="301"/>
        <end position="321"/>
    </location>
</feature>
<feature type="topological domain" description="Mitochondrial intermembrane" evidence="2">
    <location>
        <begin position="322"/>
        <end position="332"/>
    </location>
</feature>
<feature type="transmembrane region" description="Helical" evidence="3">
    <location>
        <begin position="333"/>
        <end position="353"/>
    </location>
</feature>
<feature type="topological domain" description="Mitochondrial matrix" evidence="2">
    <location>
        <begin position="354"/>
        <end position="371"/>
    </location>
</feature>
<keyword id="KW-0414">Isoprene biosynthesis</keyword>
<keyword id="KW-0472">Membrane</keyword>
<keyword id="KW-0496">Mitochondrion</keyword>
<keyword id="KW-0999">Mitochondrion inner membrane</keyword>
<keyword id="KW-1185">Reference proteome</keyword>
<keyword id="KW-0808">Transferase</keyword>
<keyword id="KW-0809">Transit peptide</keyword>
<keyword id="KW-0812">Transmembrane</keyword>
<keyword id="KW-1133">Transmembrane helix</keyword>
<keyword id="KW-0831">Ubiquinone biosynthesis</keyword>
<dbReference type="EC" id="2.5.1.39" evidence="3"/>
<dbReference type="EMBL" id="BC112551">
    <property type="protein sequence ID" value="AAI12552.1"/>
    <property type="molecule type" value="mRNA"/>
</dbReference>
<dbReference type="RefSeq" id="NP_001039358.1">
    <property type="nucleotide sequence ID" value="NM_001045893.2"/>
</dbReference>
<dbReference type="SMR" id="Q2KIQ4"/>
<dbReference type="FunCoup" id="Q2KIQ4">
    <property type="interactions" value="773"/>
</dbReference>
<dbReference type="STRING" id="9913.ENSBTAP00000007549"/>
<dbReference type="PaxDb" id="9913-ENSBTAP00000007549"/>
<dbReference type="GeneID" id="504633"/>
<dbReference type="KEGG" id="bta:504633"/>
<dbReference type="CTD" id="27235"/>
<dbReference type="eggNOG" id="KOG1381">
    <property type="taxonomic scope" value="Eukaryota"/>
</dbReference>
<dbReference type="InParanoid" id="Q2KIQ4"/>
<dbReference type="OrthoDB" id="18170at2759"/>
<dbReference type="UniPathway" id="UPA00232"/>
<dbReference type="Proteomes" id="UP000009136">
    <property type="component" value="Unplaced"/>
</dbReference>
<dbReference type="GO" id="GO:0005743">
    <property type="term" value="C:mitochondrial inner membrane"/>
    <property type="evidence" value="ECO:0000250"/>
    <property type="project" value="UniProtKB"/>
</dbReference>
<dbReference type="GO" id="GO:0008412">
    <property type="term" value="F:4-hydroxybenzoate polyprenyltransferase activity"/>
    <property type="evidence" value="ECO:0000250"/>
    <property type="project" value="UniProtKB"/>
</dbReference>
<dbReference type="GO" id="GO:0008299">
    <property type="term" value="P:isoprenoid biosynthetic process"/>
    <property type="evidence" value="ECO:0007669"/>
    <property type="project" value="UniProtKB-UniRule"/>
</dbReference>
<dbReference type="GO" id="GO:0006744">
    <property type="term" value="P:ubiquinone biosynthetic process"/>
    <property type="evidence" value="ECO:0000250"/>
    <property type="project" value="UniProtKB"/>
</dbReference>
<dbReference type="CDD" id="cd13959">
    <property type="entry name" value="PT_UbiA_COQ2"/>
    <property type="match status" value="1"/>
</dbReference>
<dbReference type="FunFam" id="1.10.357.140:FF:000003">
    <property type="entry name" value="4-hydroxybenzoate polyprenyltransferase, mitochondrial"/>
    <property type="match status" value="1"/>
</dbReference>
<dbReference type="Gene3D" id="1.10.357.140">
    <property type="entry name" value="UbiA prenyltransferase"/>
    <property type="match status" value="1"/>
</dbReference>
<dbReference type="HAMAP" id="MF_01635">
    <property type="entry name" value="UbiA"/>
    <property type="match status" value="1"/>
</dbReference>
<dbReference type="InterPro" id="IPR006370">
    <property type="entry name" value="HB_polyprenyltransferase-like"/>
</dbReference>
<dbReference type="InterPro" id="IPR039653">
    <property type="entry name" value="Prenyltransferase"/>
</dbReference>
<dbReference type="InterPro" id="IPR000537">
    <property type="entry name" value="UbiA_prenyltransferase"/>
</dbReference>
<dbReference type="InterPro" id="IPR030470">
    <property type="entry name" value="UbiA_prenylTrfase_CS"/>
</dbReference>
<dbReference type="InterPro" id="IPR044878">
    <property type="entry name" value="UbiA_sf"/>
</dbReference>
<dbReference type="NCBIfam" id="TIGR01474">
    <property type="entry name" value="ubiA_proteo"/>
    <property type="match status" value="1"/>
</dbReference>
<dbReference type="PANTHER" id="PTHR11048:SF28">
    <property type="entry name" value="4-HYDROXYBENZOATE POLYPRENYLTRANSFERASE, MITOCHONDRIAL"/>
    <property type="match status" value="1"/>
</dbReference>
<dbReference type="PANTHER" id="PTHR11048">
    <property type="entry name" value="PRENYLTRANSFERASES"/>
    <property type="match status" value="1"/>
</dbReference>
<dbReference type="Pfam" id="PF01040">
    <property type="entry name" value="UbiA"/>
    <property type="match status" value="1"/>
</dbReference>
<dbReference type="PROSITE" id="PS00943">
    <property type="entry name" value="UBIA"/>
    <property type="match status" value="1"/>
</dbReference>
<protein>
    <recommendedName>
        <fullName evidence="3">4-hydroxybenzoate polyprenyltransferase, mitochondrial</fullName>
        <shortName evidence="3">4-HB polyprenyltransferase</shortName>
        <ecNumber evidence="3">2.5.1.39</ecNumber>
    </recommendedName>
    <alternativeName>
        <fullName evidence="3">Para-hydroxybenzoate--polyprenyltransferase</fullName>
        <shortName evidence="3">PHB:PPT</shortName>
        <shortName evidence="3">PHB:polyprenyltransferase</shortName>
    </alternativeName>
</protein>
<gene>
    <name evidence="3" type="primary">COQ2</name>
</gene>
<proteinExistence type="evidence at transcript level"/>
<reference key="1">
    <citation type="submission" date="2006-01" db="EMBL/GenBank/DDBJ databases">
        <authorList>
            <consortium name="NIH - Mammalian Gene Collection (MGC) project"/>
        </authorList>
    </citation>
    <scope>NUCLEOTIDE SEQUENCE [LARGE SCALE MRNA]</scope>
    <source>
        <strain>Hereford</strain>
        <tissue>Testis</tissue>
    </source>
</reference>
<name>COQ2_BOVIN</name>
<evidence type="ECO:0000250" key="1">
    <source>
        <dbReference type="UniProtKB" id="Q499N4"/>
    </source>
</evidence>
<evidence type="ECO:0000250" key="2">
    <source>
        <dbReference type="UniProtKB" id="Q96H96"/>
    </source>
</evidence>
<evidence type="ECO:0000255" key="3">
    <source>
        <dbReference type="HAMAP-Rule" id="MF_03189"/>
    </source>
</evidence>
<organism>
    <name type="scientific">Bos taurus</name>
    <name type="common">Bovine</name>
    <dbReference type="NCBI Taxonomy" id="9913"/>
    <lineage>
        <taxon>Eukaryota</taxon>
        <taxon>Metazoa</taxon>
        <taxon>Chordata</taxon>
        <taxon>Craniata</taxon>
        <taxon>Vertebrata</taxon>
        <taxon>Euteleostomi</taxon>
        <taxon>Mammalia</taxon>
        <taxon>Eutheria</taxon>
        <taxon>Laurasiatheria</taxon>
        <taxon>Artiodactyla</taxon>
        <taxon>Ruminantia</taxon>
        <taxon>Pecora</taxon>
        <taxon>Bovidae</taxon>
        <taxon>Bovinae</taxon>
        <taxon>Bos</taxon>
    </lineage>
</organism>
<sequence length="371" mass="40628">MLGSCGAGLVRGLRAETQAWLWGTRGRSLALVHAARGLHAANWQPSPGQGPRGRPLSLSAAAVVNSAPRPLQPYLRLMRLDKPIGTWLLYLPCTWSIGLAADPGCLPDWYMLSLFGTGAVLMRGAGCTINDMWDRDYDKKVTRTASRPIAAGDISTFRSFVFLGGQLTLALGVLLCLNYYSIALGAASLLLVTTYPLMKRITYWPQLALGLTFNWGALLGWSAVKGSCDPSVCLPLYFSGIMWTLIYDTIYAHQDKKDDALIGLKSTALLFREDTKKWLSGFSVAMLGALSLVGVNSGQTMPYYTALAAVGAHLAHQIYTLDINRPEDCWEKFTSNRTIGLIIFLGIVLGNLCKAKETDKTRKNIENRMEN</sequence>
<comment type="function">
    <text evidence="1 2">Mediates the second step in the final reaction sequence of coenzyme Q (CoQ) biosynthesis. Catalyzes the prenylation of para-hydroxybenzoate (PHB) with an all-trans polyprenyl donor (such as all-trans-decaprenyl diphosphate). The length of the polyprenyl side chain varies depending on the species, in humans, the side chain is comprised of 10 isoprenyls (decaprenyl) producing CoQ10 (also known as ubiquinone), whereas rodents predominantly generate CoQ9. However, this specificity is not complete, human tissues have low amounts of CoQ9 and rodent organs contain some CoQ10. Plays a central role in the biosynthesis of CoQ10. CoQ10 is a vital molecule that transports electrons from mitochondrial respiratory chain complexes. CoQs also function as cofactors for uncoupling protein and play a role as regulators of the extracellularly-induced ceramide-dependent apoptotic pathway (By similarity). Regulates mitochondrial permeability transition pore (mPTP) opening and ROS production (pivotal events in cell death) in a tissue specific manner (By similarity).</text>
</comment>
<comment type="catalytic activity">
    <reaction evidence="2">
        <text>an all-trans-polyprenyl diphosphate + 4-hydroxybenzoate = a 4-hydroxy-3-(all-trans-polyprenyl)benzoate + diphosphate</text>
        <dbReference type="Rhea" id="RHEA:44504"/>
        <dbReference type="Rhea" id="RHEA-COMP:9514"/>
        <dbReference type="Rhea" id="RHEA-COMP:9564"/>
        <dbReference type="ChEBI" id="CHEBI:17879"/>
        <dbReference type="ChEBI" id="CHEBI:33019"/>
        <dbReference type="ChEBI" id="CHEBI:58914"/>
        <dbReference type="ChEBI" id="CHEBI:78396"/>
        <dbReference type="EC" id="2.5.1.39"/>
    </reaction>
    <physiologicalReaction direction="left-to-right" evidence="2">
        <dbReference type="Rhea" id="RHEA:44505"/>
    </physiologicalReaction>
</comment>
<comment type="catalytic activity">
    <reaction evidence="2">
        <text>all-trans-decaprenyl diphosphate + 4-hydroxybenzoate = 4-hydroxy-3-(all-trans-decaprenyl)benzoate + diphosphate</text>
        <dbReference type="Rhea" id="RHEA:44564"/>
        <dbReference type="ChEBI" id="CHEBI:17879"/>
        <dbReference type="ChEBI" id="CHEBI:33019"/>
        <dbReference type="ChEBI" id="CHEBI:60721"/>
        <dbReference type="ChEBI" id="CHEBI:84503"/>
        <dbReference type="EC" id="2.5.1.39"/>
    </reaction>
    <physiologicalReaction direction="left-to-right" evidence="2">
        <dbReference type="Rhea" id="RHEA:44565"/>
    </physiologicalReaction>
</comment>
<comment type="catalytic activity">
    <reaction evidence="2">
        <text>all-trans-nonaprenyl diphosphate + 4-hydroxybenzoate = 4-hydroxy-3-(all-trans-nonaprenyl)benzoate + diphosphate</text>
        <dbReference type="Rhea" id="RHEA:17709"/>
        <dbReference type="ChEBI" id="CHEBI:17879"/>
        <dbReference type="ChEBI" id="CHEBI:33019"/>
        <dbReference type="ChEBI" id="CHEBI:58391"/>
        <dbReference type="ChEBI" id="CHEBI:84502"/>
        <dbReference type="EC" id="2.5.1.39"/>
    </reaction>
    <physiologicalReaction direction="left-to-right" evidence="2">
        <dbReference type="Rhea" id="RHEA:17710"/>
    </physiologicalReaction>
</comment>
<comment type="cofactor">
    <cofactor evidence="3">
        <name>Mg(2+)</name>
        <dbReference type="ChEBI" id="CHEBI:18420"/>
    </cofactor>
</comment>
<comment type="pathway">
    <text evidence="2">Cofactor biosynthesis; ubiquinone biosynthesis.</text>
</comment>
<comment type="subcellular location">
    <subcellularLocation>
        <location evidence="3">Mitochondrion inner membrane</location>
        <topology evidence="3">Multi-pass membrane protein</topology>
        <orientation evidence="3">Matrix side</orientation>
    </subcellularLocation>
</comment>
<comment type="similarity">
    <text evidence="3">Belongs to the UbiA prenyltransferase family.</text>
</comment>
<accession>Q2KIQ4</accession>